<gene>
    <name type="primary">Gas6</name>
</gene>
<reference key="1">
    <citation type="journal article" date="1993" name="Mol. Cell. Biol.">
        <title>The protein encoded by a growth arrest-specific gene (gas6) is a new member of the vitamin K-dependent proteins related to protein S, a negative coregulator in the blood coagulation cascade.</title>
        <authorList>
            <person name="Manfioletti G."/>
            <person name="Brancolini C."/>
            <person name="Avanzi G."/>
            <person name="Schneider C."/>
        </authorList>
    </citation>
    <scope>NUCLEOTIDE SEQUENCE [MRNA]</scope>
</reference>
<reference key="2">
    <citation type="journal article" date="2004" name="Genome Res.">
        <title>The status, quality, and expansion of the NIH full-length cDNA project: the Mammalian Gene Collection (MGC).</title>
        <authorList>
            <consortium name="The MGC Project Team"/>
        </authorList>
    </citation>
    <scope>NUCLEOTIDE SEQUENCE [LARGE SCALE MRNA]</scope>
</reference>
<reference key="3">
    <citation type="journal article" date="2001" name="Nat. Med.">
        <title>Deficiency or inhibition of Gas6 causes platelet dysfunction and protects mice against thrombosis.</title>
        <authorList>
            <person name="Angelillo-Scherrer A."/>
            <person name="de Frutos P."/>
            <person name="Aparicio C."/>
            <person name="Melis E."/>
            <person name="Savi P."/>
            <person name="Lupu F."/>
            <person name="Arnout J."/>
            <person name="Dewerchin M."/>
            <person name="Hoylaerts M."/>
            <person name="Herbert J."/>
            <person name="Collen D."/>
            <person name="Dahlback B."/>
            <person name="Carmeliet P."/>
        </authorList>
    </citation>
    <scope>FUNCTION</scope>
</reference>
<keyword id="KW-0106">Calcium</keyword>
<keyword id="KW-1015">Disulfide bond</keyword>
<keyword id="KW-0245">EGF-like domain</keyword>
<keyword id="KW-0301">Gamma-carboxyglutamic acid</keyword>
<keyword id="KW-0325">Glycoprotein</keyword>
<keyword id="KW-0341">Growth regulation</keyword>
<keyword id="KW-0479">Metal-binding</keyword>
<keyword id="KW-0597">Phosphoprotein</keyword>
<keyword id="KW-1185">Reference proteome</keyword>
<keyword id="KW-0677">Repeat</keyword>
<keyword id="KW-0964">Secreted</keyword>
<keyword id="KW-0732">Signal</keyword>
<sequence>MPPPPGPAAALGTALLLLLLASESSHTVLLRAREAAQFLRPRQRRAYQVFEEAKQGHLERECVEEVCSKEEAREVFENDPETEYFYPRYQECMRKYGRPEEKNPDFAKCVQNLPDQCTPNPCDKKGTHICQDLMGNFFCVCTDGWGGRLCDKDVNECVQKNGGCSQVCHNKPGSFQCACHSGFSLASDGQTCQDIDECTDSDTCGDARCKNLPGSYSCLCDEGYTYSSKEKTCQDVDECQQDRCEQTCVNSPGSYTCHCDGRGGLKLSPDMDTCEDILPCVPFSMAKSVKSLYLGRMFSGTPVIRLRFKRLQPTRLLAEFDFRTFDPEGVLFFAGGRSDSTWIVLGLRAGRLELQLRYNGVGRITSSGPTINHGMWQTISVEELERNLVIKVNKDAVMKIAVAGELFQLERGLYHLNLTVGGIPFKESELVQPINPRLDGCMRSWNWLNGEDSAIQETVKANTKMQCFSVTERGSFFPGNGFATYRLNYTRTSLDVGTETTWEVKVVARIRPATDTGVLLALVGDDDVVPISVALVDYHSTKKLKKQLVVLAVEDVALALMEIKVCDSQEHTVTVSLREGEATLEVDGTKGQSEVSTAQLQERLDTLKTHLQGSVHTYVGGLPEVSVISAPVTAFYRGCMTLEVNGKILDLDTASYKHSDITSHSCPPVEHATP</sequence>
<comment type="function">
    <text evidence="8">Ligand for tyrosine-protein kinase receptors AXL, TYRO3 and MER whose signaling is implicated in cell growth and survival, cell adhesion and cell migration. GAS6/AXL signaling plays a role in various processes such as endothelial cell survival during acidification by preventing apoptosis, optimal cytokine signaling during human natural killer cell development, hepatic regeneration, gonadotropin-releasing hormone neuron survival and migration, platelet activation, or regulation of thrombotic responses.</text>
</comment>
<comment type="subunit">
    <text>Heterodimer and heterotetramer with AXL.</text>
</comment>
<comment type="subcellular location">
    <subcellularLocation>
        <location evidence="1">Secreted</location>
    </subcellularLocation>
</comment>
<comment type="PTM">
    <text evidence="7">Gamma-carboxyglutamate residues are formed by vitamin K dependent carboxylation. These residues are essential for the binding of calcium.</text>
</comment>
<comment type="miscellaneous">
    <text>GAS6 deficient mice show protection against thrombosis, but no spontaneous bleeding.</text>
</comment>
<protein>
    <recommendedName>
        <fullName>Growth arrest-specific protein 6</fullName>
        <shortName>GAS-6</shortName>
    </recommendedName>
    <alternativeName>
        <fullName>AXL receptor tyrosine kinase ligand</fullName>
    </alternativeName>
</protein>
<organism>
    <name type="scientific">Mus musculus</name>
    <name type="common">Mouse</name>
    <dbReference type="NCBI Taxonomy" id="10090"/>
    <lineage>
        <taxon>Eukaryota</taxon>
        <taxon>Metazoa</taxon>
        <taxon>Chordata</taxon>
        <taxon>Craniata</taxon>
        <taxon>Vertebrata</taxon>
        <taxon>Euteleostomi</taxon>
        <taxon>Mammalia</taxon>
        <taxon>Eutheria</taxon>
        <taxon>Euarchontoglires</taxon>
        <taxon>Glires</taxon>
        <taxon>Rodentia</taxon>
        <taxon>Myomorpha</taxon>
        <taxon>Muroidea</taxon>
        <taxon>Muridae</taxon>
        <taxon>Murinae</taxon>
        <taxon>Mus</taxon>
        <taxon>Mus</taxon>
    </lineage>
</organism>
<dbReference type="EMBL" id="X59846">
    <property type="protein sequence ID" value="CAA42507.1"/>
    <property type="molecule type" value="mRNA"/>
</dbReference>
<dbReference type="EMBL" id="BC005444">
    <property type="protein sequence ID" value="AAH05444.1"/>
    <property type="molecule type" value="mRNA"/>
</dbReference>
<dbReference type="CCDS" id="CCDS40232.1"/>
<dbReference type="PIR" id="A48089">
    <property type="entry name" value="A48089"/>
</dbReference>
<dbReference type="RefSeq" id="NP_062394.2">
    <property type="nucleotide sequence ID" value="NM_019521.2"/>
</dbReference>
<dbReference type="SMR" id="Q61592"/>
<dbReference type="BioGRID" id="199835">
    <property type="interactions" value="3"/>
</dbReference>
<dbReference type="FunCoup" id="Q61592">
    <property type="interactions" value="296"/>
</dbReference>
<dbReference type="STRING" id="10090.ENSMUSP00000033828"/>
<dbReference type="GlyCosmos" id="Q61592">
    <property type="glycosylation" value="2 sites, No reported glycans"/>
</dbReference>
<dbReference type="GlyGen" id="Q61592">
    <property type="glycosylation" value="2 sites, 1 N-linked glycan (1 site)"/>
</dbReference>
<dbReference type="PhosphoSitePlus" id="Q61592"/>
<dbReference type="SwissPalm" id="Q61592"/>
<dbReference type="PaxDb" id="10090-ENSMUSP00000033828"/>
<dbReference type="ProteomicsDB" id="273033"/>
<dbReference type="Pumba" id="Q61592"/>
<dbReference type="Antibodypedia" id="1292">
    <property type="antibodies" value="422 antibodies from 33 providers"/>
</dbReference>
<dbReference type="DNASU" id="14456"/>
<dbReference type="Ensembl" id="ENSMUST00000033828.7">
    <property type="protein sequence ID" value="ENSMUSP00000033828.6"/>
    <property type="gene ID" value="ENSMUSG00000031451.7"/>
</dbReference>
<dbReference type="GeneID" id="14456"/>
<dbReference type="KEGG" id="mmu:14456"/>
<dbReference type="UCSC" id="uc009kya.1">
    <property type="organism name" value="mouse"/>
</dbReference>
<dbReference type="AGR" id="MGI:95660"/>
<dbReference type="CTD" id="2621"/>
<dbReference type="MGI" id="MGI:95660">
    <property type="gene designation" value="Gas6"/>
</dbReference>
<dbReference type="VEuPathDB" id="HostDB:ENSMUSG00000031451"/>
<dbReference type="eggNOG" id="ENOG502QT2N">
    <property type="taxonomic scope" value="Eukaryota"/>
</dbReference>
<dbReference type="GeneTree" id="ENSGT00940000161271"/>
<dbReference type="HOGENOM" id="CLU_026236_0_0_1"/>
<dbReference type="InParanoid" id="Q61592"/>
<dbReference type="OMA" id="PIINHGM"/>
<dbReference type="OrthoDB" id="4062651at2759"/>
<dbReference type="PhylomeDB" id="Q61592"/>
<dbReference type="TreeFam" id="TF352157"/>
<dbReference type="Reactome" id="R-MMU-114608">
    <property type="pathway name" value="Platelet degranulation"/>
</dbReference>
<dbReference type="Reactome" id="R-MMU-159763">
    <property type="pathway name" value="Transport of gamma-carboxylated protein precursors from the endoplasmic reticulum to the Golgi apparatus"/>
</dbReference>
<dbReference type="Reactome" id="R-MMU-159782">
    <property type="pathway name" value="Removal of aminoterminal propeptides from gamma-carboxylated proteins"/>
</dbReference>
<dbReference type="Reactome" id="R-MMU-202733">
    <property type="pathway name" value="Cell surface interactions at the vascular wall"/>
</dbReference>
<dbReference type="Reactome" id="R-MMU-381426">
    <property type="pathway name" value="Regulation of Insulin-like Growth Factor (IGF) transport and uptake by Insulin-like Growth Factor Binding Proteins (IGFBPs)"/>
</dbReference>
<dbReference type="Reactome" id="R-MMU-8957275">
    <property type="pathway name" value="Post-translational protein phosphorylation"/>
</dbReference>
<dbReference type="BioGRID-ORCS" id="14456">
    <property type="hits" value="3 hits in 79 CRISPR screens"/>
</dbReference>
<dbReference type="ChiTaRS" id="Gas6">
    <property type="organism name" value="mouse"/>
</dbReference>
<dbReference type="PRO" id="PR:Q61592"/>
<dbReference type="Proteomes" id="UP000000589">
    <property type="component" value="Chromosome 8"/>
</dbReference>
<dbReference type="RNAct" id="Q61592">
    <property type="molecule type" value="protein"/>
</dbReference>
<dbReference type="Bgee" id="ENSMUSG00000031451">
    <property type="expression patterns" value="Expressed in stroma of bone marrow and 265 other cell types or tissues"/>
</dbReference>
<dbReference type="GO" id="GO:0005737">
    <property type="term" value="C:cytoplasm"/>
    <property type="evidence" value="ECO:0000250"/>
    <property type="project" value="UniProtKB"/>
</dbReference>
<dbReference type="GO" id="GO:0005615">
    <property type="term" value="C:extracellular space"/>
    <property type="evidence" value="ECO:0000314"/>
    <property type="project" value="MGI"/>
</dbReference>
<dbReference type="GO" id="GO:0005509">
    <property type="term" value="F:calcium ion binding"/>
    <property type="evidence" value="ECO:0007669"/>
    <property type="project" value="InterPro"/>
</dbReference>
<dbReference type="GO" id="GO:0043027">
    <property type="term" value="F:cysteine-type endopeptidase inhibitor activity involved in apoptotic process"/>
    <property type="evidence" value="ECO:0000250"/>
    <property type="project" value="UniProtKB"/>
</dbReference>
<dbReference type="GO" id="GO:0001786">
    <property type="term" value="F:phosphatidylserine binding"/>
    <property type="evidence" value="ECO:0000250"/>
    <property type="project" value="UniProtKB"/>
</dbReference>
<dbReference type="GO" id="GO:0030674">
    <property type="term" value="F:protein-macromolecule adaptor activity"/>
    <property type="evidence" value="ECO:0000250"/>
    <property type="project" value="UniProtKB"/>
</dbReference>
<dbReference type="GO" id="GO:0048018">
    <property type="term" value="F:receptor ligand activity"/>
    <property type="evidence" value="ECO:0000314"/>
    <property type="project" value="MGI"/>
</dbReference>
<dbReference type="GO" id="GO:0030971">
    <property type="term" value="F:receptor tyrosine kinase binding"/>
    <property type="evidence" value="ECO:0007669"/>
    <property type="project" value="Ensembl"/>
</dbReference>
<dbReference type="GO" id="GO:0005102">
    <property type="term" value="F:signaling receptor binding"/>
    <property type="evidence" value="ECO:0000250"/>
    <property type="project" value="UniProtKB"/>
</dbReference>
<dbReference type="GO" id="GO:0032148">
    <property type="term" value="P:activation of protein kinase B activity"/>
    <property type="evidence" value="ECO:0000250"/>
    <property type="project" value="UniProtKB"/>
</dbReference>
<dbReference type="GO" id="GO:0031100">
    <property type="term" value="P:animal organ regeneration"/>
    <property type="evidence" value="ECO:0007669"/>
    <property type="project" value="Ensembl"/>
</dbReference>
<dbReference type="GO" id="GO:0043277">
    <property type="term" value="P:apoptotic cell clearance"/>
    <property type="evidence" value="ECO:0000314"/>
    <property type="project" value="MGI"/>
</dbReference>
<dbReference type="GO" id="GO:0006915">
    <property type="term" value="P:apoptotic process"/>
    <property type="evidence" value="ECO:0000315"/>
    <property type="project" value="MGI"/>
</dbReference>
<dbReference type="GO" id="GO:0035754">
    <property type="term" value="P:B cell chemotaxis"/>
    <property type="evidence" value="ECO:0000250"/>
    <property type="project" value="UniProtKB"/>
</dbReference>
<dbReference type="GO" id="GO:0007596">
    <property type="term" value="P:blood coagulation"/>
    <property type="evidence" value="ECO:0000315"/>
    <property type="project" value="MGI"/>
</dbReference>
<dbReference type="GO" id="GO:0070588">
    <property type="term" value="P:calcium ion transmembrane transport"/>
    <property type="evidence" value="ECO:0007669"/>
    <property type="project" value="Ensembl"/>
</dbReference>
<dbReference type="GO" id="GO:0031589">
    <property type="term" value="P:cell-substrate adhesion"/>
    <property type="evidence" value="ECO:0000315"/>
    <property type="project" value="MGI"/>
</dbReference>
<dbReference type="GO" id="GO:0071333">
    <property type="term" value="P:cellular response to glucose stimulus"/>
    <property type="evidence" value="ECO:0000250"/>
    <property type="project" value="UniProtKB"/>
</dbReference>
<dbReference type="GO" id="GO:0071363">
    <property type="term" value="P:cellular response to growth factor stimulus"/>
    <property type="evidence" value="ECO:0000314"/>
    <property type="project" value="MGI"/>
</dbReference>
<dbReference type="GO" id="GO:0035457">
    <property type="term" value="P:cellular response to interferon-alpha"/>
    <property type="evidence" value="ECO:0000250"/>
    <property type="project" value="UniProtKB"/>
</dbReference>
<dbReference type="GO" id="GO:0009267">
    <property type="term" value="P:cellular response to starvation"/>
    <property type="evidence" value="ECO:0000314"/>
    <property type="project" value="MGI"/>
</dbReference>
<dbReference type="GO" id="GO:0071307">
    <property type="term" value="P:cellular response to vitamin K"/>
    <property type="evidence" value="ECO:0000250"/>
    <property type="project" value="UniProtKB"/>
</dbReference>
<dbReference type="GO" id="GO:0071466">
    <property type="term" value="P:cellular response to xenobiotic stimulus"/>
    <property type="evidence" value="ECO:0000250"/>
    <property type="project" value="UniProtKB"/>
</dbReference>
<dbReference type="GO" id="GO:0097028">
    <property type="term" value="P:dendritic cell differentiation"/>
    <property type="evidence" value="ECO:0007669"/>
    <property type="project" value="Ensembl"/>
</dbReference>
<dbReference type="GO" id="GO:0007167">
    <property type="term" value="P:enzyme-linked receptor protein signaling pathway"/>
    <property type="evidence" value="ECO:0000316"/>
    <property type="project" value="MGI"/>
</dbReference>
<dbReference type="GO" id="GO:0085029">
    <property type="term" value="P:extracellular matrix assembly"/>
    <property type="evidence" value="ECO:0000250"/>
    <property type="project" value="UniProtKB"/>
</dbReference>
<dbReference type="GO" id="GO:0044346">
    <property type="term" value="P:fibroblast apoptotic process"/>
    <property type="evidence" value="ECO:0000315"/>
    <property type="project" value="MGI"/>
</dbReference>
<dbReference type="GO" id="GO:0019064">
    <property type="term" value="P:fusion of virus membrane with host plasma membrane"/>
    <property type="evidence" value="ECO:0000250"/>
    <property type="project" value="UniProtKB"/>
</dbReference>
<dbReference type="GO" id="GO:0097241">
    <property type="term" value="P:hematopoietic stem cell migration to bone marrow"/>
    <property type="evidence" value="ECO:0000250"/>
    <property type="project" value="UniProtKB"/>
</dbReference>
<dbReference type="GO" id="GO:0033028">
    <property type="term" value="P:myeloid cell apoptotic process"/>
    <property type="evidence" value="ECO:0000315"/>
    <property type="project" value="MGI"/>
</dbReference>
<dbReference type="GO" id="GO:0043066">
    <property type="term" value="P:negative regulation of apoptotic process"/>
    <property type="evidence" value="ECO:0000314"/>
    <property type="project" value="UniProtKB"/>
</dbReference>
<dbReference type="GO" id="GO:0070168">
    <property type="term" value="P:negative regulation of biomineral tissue development"/>
    <property type="evidence" value="ECO:0000250"/>
    <property type="project" value="UniProtKB"/>
</dbReference>
<dbReference type="GO" id="GO:2000669">
    <property type="term" value="P:negative regulation of dendritic cell apoptotic process"/>
    <property type="evidence" value="ECO:0000250"/>
    <property type="project" value="UniProtKB"/>
</dbReference>
<dbReference type="GO" id="GO:0045892">
    <property type="term" value="P:negative regulation of DNA-templated transcription"/>
    <property type="evidence" value="ECO:0000250"/>
    <property type="project" value="UniProtKB"/>
</dbReference>
<dbReference type="GO" id="GO:2000352">
    <property type="term" value="P:negative regulation of endothelial cell apoptotic process"/>
    <property type="evidence" value="ECO:0000250"/>
    <property type="project" value="UniProtKB"/>
</dbReference>
<dbReference type="GO" id="GO:2000270">
    <property type="term" value="P:negative regulation of fibroblast apoptotic process"/>
    <property type="evidence" value="ECO:0000315"/>
    <property type="project" value="MGI"/>
</dbReference>
<dbReference type="GO" id="GO:0032692">
    <property type="term" value="P:negative regulation of interleukin-1 production"/>
    <property type="evidence" value="ECO:0000250"/>
    <property type="project" value="UniProtKB"/>
</dbReference>
<dbReference type="GO" id="GO:0032715">
    <property type="term" value="P:negative regulation of interleukin-6 production"/>
    <property type="evidence" value="ECO:0000250"/>
    <property type="project" value="UniProtKB"/>
</dbReference>
<dbReference type="GO" id="GO:0033033">
    <property type="term" value="P:negative regulation of myeloid cell apoptotic process"/>
    <property type="evidence" value="ECO:0000315"/>
    <property type="project" value="MGI"/>
</dbReference>
<dbReference type="GO" id="GO:1900142">
    <property type="term" value="P:negative regulation of oligodendrocyte apoptotic process"/>
    <property type="evidence" value="ECO:0007669"/>
    <property type="project" value="Ensembl"/>
</dbReference>
<dbReference type="GO" id="GO:2000533">
    <property type="term" value="P:negative regulation of renal albumin absorption"/>
    <property type="evidence" value="ECO:0000250"/>
    <property type="project" value="UniProtKB"/>
</dbReference>
<dbReference type="GO" id="GO:0032720">
    <property type="term" value="P:negative regulation of tumor necrosis factor production"/>
    <property type="evidence" value="ECO:0000250"/>
    <property type="project" value="UniProtKB"/>
</dbReference>
<dbReference type="GO" id="GO:0010804">
    <property type="term" value="P:negative regulation of tumor necrosis factor-mediated signaling pathway"/>
    <property type="evidence" value="ECO:0000250"/>
    <property type="project" value="UniProtKB"/>
</dbReference>
<dbReference type="GO" id="GO:0032689">
    <property type="term" value="P:negative regulation of type II interferon production"/>
    <property type="evidence" value="ECO:0000250"/>
    <property type="project" value="UniProtKB"/>
</dbReference>
<dbReference type="GO" id="GO:0001764">
    <property type="term" value="P:neuron migration"/>
    <property type="evidence" value="ECO:0000316"/>
    <property type="project" value="MGI"/>
</dbReference>
<dbReference type="GO" id="GO:0006909">
    <property type="term" value="P:phagocytosis"/>
    <property type="evidence" value="ECO:0000250"/>
    <property type="project" value="UniProtKB"/>
</dbReference>
<dbReference type="GO" id="GO:0001961">
    <property type="term" value="P:positive regulation of cytokine-mediated signaling pathway"/>
    <property type="evidence" value="ECO:0000250"/>
    <property type="project" value="UniProtKB"/>
</dbReference>
<dbReference type="GO" id="GO:2000510">
    <property type="term" value="P:positive regulation of dendritic cell chemotaxis"/>
    <property type="evidence" value="ECO:0007669"/>
    <property type="project" value="Ensembl"/>
</dbReference>
<dbReference type="GO" id="GO:0070374">
    <property type="term" value="P:positive regulation of ERK1 and ERK2 cascade"/>
    <property type="evidence" value="ECO:0000266"/>
    <property type="project" value="MGI"/>
</dbReference>
<dbReference type="GO" id="GO:0048146">
    <property type="term" value="P:positive regulation of fibroblast proliferation"/>
    <property type="evidence" value="ECO:0000250"/>
    <property type="project" value="UniProtKB"/>
</dbReference>
<dbReference type="GO" id="GO:0010628">
    <property type="term" value="P:positive regulation of gene expression"/>
    <property type="evidence" value="ECO:0000250"/>
    <property type="project" value="UniProtKB"/>
</dbReference>
<dbReference type="GO" id="GO:0003104">
    <property type="term" value="P:positive regulation of glomerular filtration"/>
    <property type="evidence" value="ECO:0000250"/>
    <property type="project" value="UniProtKB"/>
</dbReference>
<dbReference type="GO" id="GO:0032825">
    <property type="term" value="P:positive regulation of natural killer cell differentiation"/>
    <property type="evidence" value="ECO:0000250"/>
    <property type="project" value="UniProtKB"/>
</dbReference>
<dbReference type="GO" id="GO:0050766">
    <property type="term" value="P:positive regulation of phagocytosis"/>
    <property type="evidence" value="ECO:0000250"/>
    <property type="project" value="UniProtKB"/>
</dbReference>
<dbReference type="GO" id="GO:0051897">
    <property type="term" value="P:positive regulation of phosphatidylinositol 3-kinase/protein kinase B signal transduction"/>
    <property type="evidence" value="ECO:0000315"/>
    <property type="project" value="MGI"/>
</dbReference>
<dbReference type="GO" id="GO:0046827">
    <property type="term" value="P:positive regulation of protein export from nucleus"/>
    <property type="evidence" value="ECO:0000250"/>
    <property type="project" value="UniProtKB"/>
</dbReference>
<dbReference type="GO" id="GO:0045860">
    <property type="term" value="P:positive regulation of protein kinase activity"/>
    <property type="evidence" value="ECO:0000250"/>
    <property type="project" value="UniProtKB"/>
</dbReference>
<dbReference type="GO" id="GO:0001934">
    <property type="term" value="P:positive regulation of protein phosphorylation"/>
    <property type="evidence" value="ECO:0000250"/>
    <property type="project" value="UniProtKB"/>
</dbReference>
<dbReference type="GO" id="GO:0032008">
    <property type="term" value="P:positive regulation of TOR signaling"/>
    <property type="evidence" value="ECO:0000250"/>
    <property type="project" value="UniProtKB"/>
</dbReference>
<dbReference type="GO" id="GO:0072659">
    <property type="term" value="P:protein localization to plasma membrane"/>
    <property type="evidence" value="ECO:0000250"/>
    <property type="project" value="UniProtKB"/>
</dbReference>
<dbReference type="GO" id="GO:0006468">
    <property type="term" value="P:protein phosphorylation"/>
    <property type="evidence" value="ECO:0000250"/>
    <property type="project" value="UniProtKB"/>
</dbReference>
<dbReference type="GO" id="GO:0046813">
    <property type="term" value="P:receptor-mediated virion attachment to host cell"/>
    <property type="evidence" value="ECO:0000250"/>
    <property type="project" value="UniProtKB"/>
</dbReference>
<dbReference type="GO" id="GO:0046718">
    <property type="term" value="P:symbiont entry into host cell"/>
    <property type="evidence" value="ECO:0000250"/>
    <property type="project" value="UniProtKB"/>
</dbReference>
<dbReference type="GO" id="GO:0019079">
    <property type="term" value="P:viral genome replication"/>
    <property type="evidence" value="ECO:0000250"/>
    <property type="project" value="UniProtKB"/>
</dbReference>
<dbReference type="CDD" id="cd00054">
    <property type="entry name" value="EGF_CA"/>
    <property type="match status" value="2"/>
</dbReference>
<dbReference type="CDD" id="cd00110">
    <property type="entry name" value="LamG"/>
    <property type="match status" value="2"/>
</dbReference>
<dbReference type="FunFam" id="2.60.120.200:FF:000118">
    <property type="entry name" value="Growth arrest specific 6"/>
    <property type="match status" value="1"/>
</dbReference>
<dbReference type="FunFam" id="2.10.25.10:FF:000528">
    <property type="entry name" value="Growth arrest-specific protein 6"/>
    <property type="match status" value="1"/>
</dbReference>
<dbReference type="FunFam" id="2.10.25.10:FF:000550">
    <property type="entry name" value="Growth arrest-specific protein 6"/>
    <property type="match status" value="1"/>
</dbReference>
<dbReference type="FunFam" id="2.60.120.200:FF:000089">
    <property type="entry name" value="growth arrest-specific protein 6"/>
    <property type="match status" value="1"/>
</dbReference>
<dbReference type="FunFam" id="2.10.25.10:FF:000119">
    <property type="entry name" value="vitamin K-dependent protein S"/>
    <property type="match status" value="1"/>
</dbReference>
<dbReference type="FunFam" id="4.10.740.10:FF:000001">
    <property type="entry name" value="vitamin K-dependent protein S"/>
    <property type="match status" value="1"/>
</dbReference>
<dbReference type="Gene3D" id="2.60.120.200">
    <property type="match status" value="2"/>
</dbReference>
<dbReference type="Gene3D" id="4.10.740.10">
    <property type="entry name" value="Coagulation Factor IX"/>
    <property type="match status" value="1"/>
</dbReference>
<dbReference type="Gene3D" id="2.10.25.10">
    <property type="entry name" value="Laminin"/>
    <property type="match status" value="4"/>
</dbReference>
<dbReference type="InterPro" id="IPR026823">
    <property type="entry name" value="cEGF"/>
</dbReference>
<dbReference type="InterPro" id="IPR017857">
    <property type="entry name" value="Coagulation_fac-like_Gla_dom"/>
</dbReference>
<dbReference type="InterPro" id="IPR013320">
    <property type="entry name" value="ConA-like_dom_sf"/>
</dbReference>
<dbReference type="InterPro" id="IPR001881">
    <property type="entry name" value="EGF-like_Ca-bd_dom"/>
</dbReference>
<dbReference type="InterPro" id="IPR000742">
    <property type="entry name" value="EGF-like_dom"/>
</dbReference>
<dbReference type="InterPro" id="IPR000152">
    <property type="entry name" value="EGF-type_Asp/Asn_hydroxyl_site"/>
</dbReference>
<dbReference type="InterPro" id="IPR018097">
    <property type="entry name" value="EGF_Ca-bd_CS"/>
</dbReference>
<dbReference type="InterPro" id="IPR051145">
    <property type="entry name" value="GAS-SHBG-PROS"/>
</dbReference>
<dbReference type="InterPro" id="IPR035972">
    <property type="entry name" value="GLA-like_dom_SF"/>
</dbReference>
<dbReference type="InterPro" id="IPR000294">
    <property type="entry name" value="GLA_domain"/>
</dbReference>
<dbReference type="InterPro" id="IPR009030">
    <property type="entry name" value="Growth_fac_rcpt_cys_sf"/>
</dbReference>
<dbReference type="InterPro" id="IPR001791">
    <property type="entry name" value="Laminin_G"/>
</dbReference>
<dbReference type="PANTHER" id="PTHR24040:SF14">
    <property type="entry name" value="GROWTH ARREST-SPECIFIC PROTEIN 6"/>
    <property type="match status" value="1"/>
</dbReference>
<dbReference type="PANTHER" id="PTHR24040">
    <property type="entry name" value="LAMININ G-LIKE DOMAIN-CONTAINING PROTEIN"/>
    <property type="match status" value="1"/>
</dbReference>
<dbReference type="Pfam" id="PF12662">
    <property type="entry name" value="cEGF"/>
    <property type="match status" value="2"/>
</dbReference>
<dbReference type="Pfam" id="PF00594">
    <property type="entry name" value="Gla"/>
    <property type="match status" value="1"/>
</dbReference>
<dbReference type="Pfam" id="PF00054">
    <property type="entry name" value="Laminin_G_1"/>
    <property type="match status" value="1"/>
</dbReference>
<dbReference type="Pfam" id="PF02210">
    <property type="entry name" value="Laminin_G_2"/>
    <property type="match status" value="1"/>
</dbReference>
<dbReference type="PRINTS" id="PR00001">
    <property type="entry name" value="GLABLOOD"/>
</dbReference>
<dbReference type="SMART" id="SM00181">
    <property type="entry name" value="EGF"/>
    <property type="match status" value="4"/>
</dbReference>
<dbReference type="SMART" id="SM00179">
    <property type="entry name" value="EGF_CA"/>
    <property type="match status" value="4"/>
</dbReference>
<dbReference type="SMART" id="SM00069">
    <property type="entry name" value="GLA"/>
    <property type="match status" value="1"/>
</dbReference>
<dbReference type="SMART" id="SM00282">
    <property type="entry name" value="LamG"/>
    <property type="match status" value="2"/>
</dbReference>
<dbReference type="SUPFAM" id="SSF49899">
    <property type="entry name" value="Concanavalin A-like lectins/glucanases"/>
    <property type="match status" value="2"/>
</dbReference>
<dbReference type="SUPFAM" id="SSF57196">
    <property type="entry name" value="EGF/Laminin"/>
    <property type="match status" value="1"/>
</dbReference>
<dbReference type="SUPFAM" id="SSF57630">
    <property type="entry name" value="GLA-domain"/>
    <property type="match status" value="1"/>
</dbReference>
<dbReference type="SUPFAM" id="SSF57184">
    <property type="entry name" value="Growth factor receptor domain"/>
    <property type="match status" value="1"/>
</dbReference>
<dbReference type="PROSITE" id="PS00010">
    <property type="entry name" value="ASX_HYDROXYL"/>
    <property type="match status" value="4"/>
</dbReference>
<dbReference type="PROSITE" id="PS00022">
    <property type="entry name" value="EGF_1"/>
    <property type="match status" value="1"/>
</dbReference>
<dbReference type="PROSITE" id="PS01186">
    <property type="entry name" value="EGF_2"/>
    <property type="match status" value="3"/>
</dbReference>
<dbReference type="PROSITE" id="PS50026">
    <property type="entry name" value="EGF_3"/>
    <property type="match status" value="4"/>
</dbReference>
<dbReference type="PROSITE" id="PS01187">
    <property type="entry name" value="EGF_CA"/>
    <property type="match status" value="3"/>
</dbReference>
<dbReference type="PROSITE" id="PS00011">
    <property type="entry name" value="GLA_1"/>
    <property type="match status" value="1"/>
</dbReference>
<dbReference type="PROSITE" id="PS50998">
    <property type="entry name" value="GLA_2"/>
    <property type="match status" value="1"/>
</dbReference>
<dbReference type="PROSITE" id="PS50025">
    <property type="entry name" value="LAM_G_DOMAIN"/>
    <property type="match status" value="2"/>
</dbReference>
<name>GAS6_MOUSE</name>
<proteinExistence type="evidence at transcript level"/>
<evidence type="ECO:0000250" key="1"/>
<evidence type="ECO:0000250" key="2">
    <source>
        <dbReference type="UniProtKB" id="Q14393"/>
    </source>
</evidence>
<evidence type="ECO:0000250" key="3">
    <source>
        <dbReference type="UniProtKB" id="Q63772"/>
    </source>
</evidence>
<evidence type="ECO:0000255" key="4"/>
<evidence type="ECO:0000255" key="5">
    <source>
        <dbReference type="PROSITE-ProRule" id="PRU00076"/>
    </source>
</evidence>
<evidence type="ECO:0000255" key="6">
    <source>
        <dbReference type="PROSITE-ProRule" id="PRU00122"/>
    </source>
</evidence>
<evidence type="ECO:0000255" key="7">
    <source>
        <dbReference type="PROSITE-ProRule" id="PRU00463"/>
    </source>
</evidence>
<evidence type="ECO:0000269" key="8">
    <source>
    </source>
</evidence>
<evidence type="ECO:0000305" key="9"/>
<feature type="signal peptide" evidence="4">
    <location>
        <begin position="1"/>
        <end position="27"/>
    </location>
</feature>
<feature type="chain" id="PRO_0000007590" description="Growth arrest-specific protein 6">
    <location>
        <begin position="28"/>
        <end position="674"/>
    </location>
</feature>
<feature type="domain" description="Gla" evidence="7">
    <location>
        <begin position="50"/>
        <end position="91"/>
    </location>
</feature>
<feature type="domain" description="EGF-like 1; calcium-binding" evidence="5">
    <location>
        <begin position="113"/>
        <end position="151"/>
    </location>
</feature>
<feature type="domain" description="EGF-like 2; calcium-binding" evidence="5">
    <location>
        <begin position="153"/>
        <end position="193"/>
    </location>
</feature>
<feature type="domain" description="EGF-like 3; calcium-binding" evidence="5">
    <location>
        <begin position="194"/>
        <end position="234"/>
    </location>
</feature>
<feature type="domain" description="EGF-like 4; calcium-binding" evidence="5">
    <location>
        <begin position="235"/>
        <end position="275"/>
    </location>
</feature>
<feature type="domain" description="Laminin G-like 1" evidence="6">
    <location>
        <begin position="295"/>
        <end position="467"/>
    </location>
</feature>
<feature type="domain" description="Laminin G-like 2" evidence="6">
    <location>
        <begin position="474"/>
        <end position="666"/>
    </location>
</feature>
<feature type="binding site" evidence="1">
    <location>
        <position position="326"/>
    </location>
    <ligand>
        <name>Ca(2+)</name>
        <dbReference type="ChEBI" id="CHEBI:29108"/>
    </ligand>
</feature>
<feature type="binding site" evidence="1">
    <location>
        <position position="328"/>
    </location>
    <ligand>
        <name>Ca(2+)</name>
        <dbReference type="ChEBI" id="CHEBI:29108"/>
    </ligand>
</feature>
<feature type="binding site" evidence="1">
    <location>
        <position position="437"/>
    </location>
    <ligand>
        <name>Ca(2+)</name>
        <dbReference type="ChEBI" id="CHEBI:29108"/>
    </ligand>
</feature>
<feature type="binding site" evidence="1">
    <location>
        <position position="652"/>
    </location>
    <ligand>
        <name>Ca(2+)</name>
        <dbReference type="ChEBI" id="CHEBI:29108"/>
    </ligand>
</feature>
<feature type="modified residue" description="Phosphoserine" evidence="2">
    <location>
        <position position="68"/>
    </location>
</feature>
<feature type="modified residue" description="Phosphothreonine" evidence="3">
    <location>
        <position position="609"/>
    </location>
</feature>
<feature type="modified residue" description="Phosphoserine" evidence="3">
    <location>
        <position position="614"/>
    </location>
</feature>
<feature type="modified residue" description="Phosphothreonine" evidence="3">
    <location>
        <position position="617"/>
    </location>
</feature>
<feature type="modified residue" description="Phosphothreonine" evidence="3">
    <location>
        <position position="633"/>
    </location>
</feature>
<feature type="modified residue" description="Phosphotyrosine" evidence="3">
    <location>
        <position position="636"/>
    </location>
</feature>
<feature type="glycosylation site" description="N-linked (GlcNAc...) asparagine" evidence="4">
    <location>
        <position position="417"/>
    </location>
</feature>
<feature type="glycosylation site" description="N-linked (GlcNAc...) asparagine" evidence="4">
    <location>
        <position position="488"/>
    </location>
</feature>
<feature type="disulfide bond" evidence="1">
    <location>
        <begin position="62"/>
        <end position="67"/>
    </location>
</feature>
<feature type="disulfide bond" evidence="1">
    <location>
        <begin position="117"/>
        <end position="130"/>
    </location>
</feature>
<feature type="disulfide bond" evidence="1">
    <location>
        <begin position="122"/>
        <end position="139"/>
    </location>
</feature>
<feature type="disulfide bond" evidence="1">
    <location>
        <begin position="141"/>
        <end position="150"/>
    </location>
</feature>
<feature type="disulfide bond" evidence="1">
    <location>
        <begin position="157"/>
        <end position="168"/>
    </location>
</feature>
<feature type="disulfide bond" evidence="1">
    <location>
        <begin position="164"/>
        <end position="177"/>
    </location>
</feature>
<feature type="disulfide bond" evidence="1">
    <location>
        <begin position="179"/>
        <end position="192"/>
    </location>
</feature>
<feature type="disulfide bond" evidence="1">
    <location>
        <begin position="198"/>
        <end position="209"/>
    </location>
</feature>
<feature type="disulfide bond" evidence="1">
    <location>
        <begin position="204"/>
        <end position="218"/>
    </location>
</feature>
<feature type="disulfide bond" evidence="1">
    <location>
        <begin position="220"/>
        <end position="233"/>
    </location>
</feature>
<feature type="disulfide bond" evidence="1">
    <location>
        <begin position="239"/>
        <end position="248"/>
    </location>
</feature>
<feature type="disulfide bond" evidence="1">
    <location>
        <begin position="244"/>
        <end position="257"/>
    </location>
</feature>
<feature type="disulfide bond" evidence="1">
    <location>
        <begin position="259"/>
        <end position="274"/>
    </location>
</feature>
<feature type="disulfide bond" evidence="1">
    <location>
        <begin position="280"/>
        <end position="566"/>
    </location>
</feature>
<feature type="disulfide bond" evidence="1">
    <location>
        <begin position="441"/>
        <end position="467"/>
    </location>
</feature>
<feature type="disulfide bond" evidence="1">
    <location>
        <begin position="639"/>
        <end position="666"/>
    </location>
</feature>
<feature type="sequence conflict" description="In Ref. 1; CAA42507." evidence="9" ref="1">
    <location>
        <position position="530"/>
    </location>
</feature>
<accession>Q61592</accession>
<accession>Q99K57</accession>